<proteinExistence type="inferred from homology"/>
<keyword id="KW-0066">ATP synthesis</keyword>
<keyword id="KW-0997">Cell inner membrane</keyword>
<keyword id="KW-1003">Cell membrane</keyword>
<keyword id="KW-0139">CF(1)</keyword>
<keyword id="KW-0375">Hydrogen ion transport</keyword>
<keyword id="KW-0406">Ion transport</keyword>
<keyword id="KW-0472">Membrane</keyword>
<keyword id="KW-1185">Reference proteome</keyword>
<keyword id="KW-0813">Transport</keyword>
<evidence type="ECO:0000255" key="1">
    <source>
        <dbReference type="HAMAP-Rule" id="MF_00815"/>
    </source>
</evidence>
<protein>
    <recommendedName>
        <fullName evidence="1">ATP synthase gamma chain</fullName>
    </recommendedName>
    <alternativeName>
        <fullName evidence="1">ATP synthase F1 sector gamma subunit</fullName>
    </alternativeName>
    <alternativeName>
        <fullName evidence="1">F-ATPase gamma subunit</fullName>
    </alternativeName>
</protein>
<comment type="function">
    <text evidence="1">Produces ATP from ADP in the presence of a proton gradient across the membrane. The gamma chain is believed to be important in regulating ATPase activity and the flow of protons through the CF(0) complex.</text>
</comment>
<comment type="subunit">
    <text evidence="1">F-type ATPases have 2 components, CF(1) - the catalytic core - and CF(0) - the membrane proton channel. CF(1) has five subunits: alpha(3), beta(3), gamma(1), delta(1), epsilon(1). CF(0) has three main subunits: a, b and c.</text>
</comment>
<comment type="subcellular location">
    <subcellularLocation>
        <location evidence="1">Cell inner membrane</location>
        <topology evidence="1">Peripheral membrane protein</topology>
    </subcellularLocation>
</comment>
<comment type="similarity">
    <text evidence="1">Belongs to the ATPase gamma chain family.</text>
</comment>
<gene>
    <name evidence="1" type="primary">atpG</name>
    <name type="ordered locus">ESA_04007</name>
</gene>
<organism>
    <name type="scientific">Cronobacter sakazakii (strain ATCC BAA-894)</name>
    <name type="common">Enterobacter sakazakii</name>
    <dbReference type="NCBI Taxonomy" id="290339"/>
    <lineage>
        <taxon>Bacteria</taxon>
        <taxon>Pseudomonadati</taxon>
        <taxon>Pseudomonadota</taxon>
        <taxon>Gammaproteobacteria</taxon>
        <taxon>Enterobacterales</taxon>
        <taxon>Enterobacteriaceae</taxon>
        <taxon>Cronobacter</taxon>
    </lineage>
</organism>
<name>ATPG_CROS8</name>
<sequence>MAGAKEIRSKIASVQNTQKITKAMEMVAASKMRKSQDRMAASRPYADTMRKVIGHLATGNLEYKHPYLEERDVKRVGYLVVSTDRGLCGGLNINLFKKLLADMKAWSDKGVQCDIAMIGSKGVSFFNSVGGNIVAQVTGMGDNPSLSDLIGPVKVMLQAYDEGRLDKLYVVSNKFINTMSQAPTITQLLPLPASEDDELKHKSWDYLYEPDPKALLDTLLRRYVESQVYQGVVENLASEQAARMVAMKAATDNGGSLIKELQLVYNKARQASITQELTEIVSGAAAV</sequence>
<accession>A7MMX0</accession>
<feature type="chain" id="PRO_1000053209" description="ATP synthase gamma chain">
    <location>
        <begin position="1"/>
        <end position="287"/>
    </location>
</feature>
<dbReference type="EMBL" id="CP000783">
    <property type="protein sequence ID" value="ABU79193.1"/>
    <property type="molecule type" value="Genomic_DNA"/>
</dbReference>
<dbReference type="RefSeq" id="WP_004386168.1">
    <property type="nucleotide sequence ID" value="NC_009778.1"/>
</dbReference>
<dbReference type="SMR" id="A7MMX0"/>
<dbReference type="GeneID" id="92215020"/>
<dbReference type="KEGG" id="esa:ESA_04007"/>
<dbReference type="HOGENOM" id="CLU_050669_0_1_6"/>
<dbReference type="Proteomes" id="UP000000260">
    <property type="component" value="Chromosome"/>
</dbReference>
<dbReference type="GO" id="GO:0005886">
    <property type="term" value="C:plasma membrane"/>
    <property type="evidence" value="ECO:0007669"/>
    <property type="project" value="UniProtKB-SubCell"/>
</dbReference>
<dbReference type="GO" id="GO:0045259">
    <property type="term" value="C:proton-transporting ATP synthase complex"/>
    <property type="evidence" value="ECO:0007669"/>
    <property type="project" value="UniProtKB-KW"/>
</dbReference>
<dbReference type="GO" id="GO:0005524">
    <property type="term" value="F:ATP binding"/>
    <property type="evidence" value="ECO:0007669"/>
    <property type="project" value="UniProtKB-UniRule"/>
</dbReference>
<dbReference type="GO" id="GO:0046933">
    <property type="term" value="F:proton-transporting ATP synthase activity, rotational mechanism"/>
    <property type="evidence" value="ECO:0007669"/>
    <property type="project" value="UniProtKB-UniRule"/>
</dbReference>
<dbReference type="GO" id="GO:0042777">
    <property type="term" value="P:proton motive force-driven plasma membrane ATP synthesis"/>
    <property type="evidence" value="ECO:0007669"/>
    <property type="project" value="UniProtKB-UniRule"/>
</dbReference>
<dbReference type="CDD" id="cd12151">
    <property type="entry name" value="F1-ATPase_gamma"/>
    <property type="match status" value="1"/>
</dbReference>
<dbReference type="FunFam" id="1.10.287.80:FF:000005">
    <property type="entry name" value="ATP synthase gamma chain"/>
    <property type="match status" value="2"/>
</dbReference>
<dbReference type="FunFam" id="3.40.1380.10:FF:000001">
    <property type="entry name" value="ATP synthase gamma chain"/>
    <property type="match status" value="1"/>
</dbReference>
<dbReference type="Gene3D" id="3.40.1380.10">
    <property type="match status" value="1"/>
</dbReference>
<dbReference type="Gene3D" id="1.10.287.80">
    <property type="entry name" value="ATP synthase, gamma subunit, helix hairpin domain"/>
    <property type="match status" value="1"/>
</dbReference>
<dbReference type="HAMAP" id="MF_00815">
    <property type="entry name" value="ATP_synth_gamma_bact"/>
    <property type="match status" value="1"/>
</dbReference>
<dbReference type="InterPro" id="IPR035968">
    <property type="entry name" value="ATP_synth_F1_ATPase_gsu"/>
</dbReference>
<dbReference type="InterPro" id="IPR000131">
    <property type="entry name" value="ATP_synth_F1_gsu"/>
</dbReference>
<dbReference type="InterPro" id="IPR023632">
    <property type="entry name" value="ATP_synth_F1_gsu_CS"/>
</dbReference>
<dbReference type="NCBIfam" id="TIGR01146">
    <property type="entry name" value="ATPsyn_F1gamma"/>
    <property type="match status" value="1"/>
</dbReference>
<dbReference type="NCBIfam" id="NF004144">
    <property type="entry name" value="PRK05621.1-1"/>
    <property type="match status" value="1"/>
</dbReference>
<dbReference type="PANTHER" id="PTHR11693">
    <property type="entry name" value="ATP SYNTHASE GAMMA CHAIN"/>
    <property type="match status" value="1"/>
</dbReference>
<dbReference type="PANTHER" id="PTHR11693:SF22">
    <property type="entry name" value="ATP SYNTHASE SUBUNIT GAMMA, MITOCHONDRIAL"/>
    <property type="match status" value="1"/>
</dbReference>
<dbReference type="Pfam" id="PF00231">
    <property type="entry name" value="ATP-synt"/>
    <property type="match status" value="1"/>
</dbReference>
<dbReference type="PRINTS" id="PR00126">
    <property type="entry name" value="ATPASEGAMMA"/>
</dbReference>
<dbReference type="SUPFAM" id="SSF52943">
    <property type="entry name" value="ATP synthase (F1-ATPase), gamma subunit"/>
    <property type="match status" value="1"/>
</dbReference>
<dbReference type="PROSITE" id="PS00153">
    <property type="entry name" value="ATPASE_GAMMA"/>
    <property type="match status" value="1"/>
</dbReference>
<reference key="1">
    <citation type="journal article" date="2010" name="PLoS ONE">
        <title>Genome sequence of Cronobacter sakazakii BAA-894 and comparative genomic hybridization analysis with other Cronobacter species.</title>
        <authorList>
            <person name="Kucerova E."/>
            <person name="Clifton S.W."/>
            <person name="Xia X.Q."/>
            <person name="Long F."/>
            <person name="Porwollik S."/>
            <person name="Fulton L."/>
            <person name="Fronick C."/>
            <person name="Minx P."/>
            <person name="Kyung K."/>
            <person name="Warren W."/>
            <person name="Fulton R."/>
            <person name="Feng D."/>
            <person name="Wollam A."/>
            <person name="Shah N."/>
            <person name="Bhonagiri V."/>
            <person name="Nash W.E."/>
            <person name="Hallsworth-Pepin K."/>
            <person name="Wilson R.K."/>
            <person name="McClelland M."/>
            <person name="Forsythe S.J."/>
        </authorList>
    </citation>
    <scope>NUCLEOTIDE SEQUENCE [LARGE SCALE GENOMIC DNA]</scope>
    <source>
        <strain>ATCC BAA-894</strain>
    </source>
</reference>